<name>GLR25_ARATH</name>
<dbReference type="EMBL" id="AL360314">
    <property type="protein sequence ID" value="CAB96656.1"/>
    <property type="status" value="ALT_SEQ"/>
    <property type="molecule type" value="Genomic_DNA"/>
</dbReference>
<dbReference type="EMBL" id="CP002688">
    <property type="protein sequence ID" value="ANM70627.1"/>
    <property type="molecule type" value="Genomic_DNA"/>
</dbReference>
<dbReference type="RefSeq" id="NP_001332219.1">
    <property type="nucleotide sequence ID" value="NM_001343168.1"/>
</dbReference>
<dbReference type="SMR" id="Q9LFN5"/>
<dbReference type="FunCoup" id="Q9LFN5">
    <property type="interactions" value="150"/>
</dbReference>
<dbReference type="STRING" id="3702.Q9LFN5"/>
<dbReference type="GlyCosmos" id="Q9LFN5">
    <property type="glycosylation" value="7 sites, No reported glycans"/>
</dbReference>
<dbReference type="GlyGen" id="Q9LFN5">
    <property type="glycosylation" value="7 sites"/>
</dbReference>
<dbReference type="PaxDb" id="3702-AT5G11210.1"/>
<dbReference type="ProteomicsDB" id="248591"/>
<dbReference type="EnsemblPlants" id="AT5G11210.5">
    <property type="protein sequence ID" value="AT5G11210.5"/>
    <property type="gene ID" value="AT5G11210"/>
</dbReference>
<dbReference type="GeneID" id="830991"/>
<dbReference type="Gramene" id="AT5G11210.5">
    <property type="protein sequence ID" value="AT5G11210.5"/>
    <property type="gene ID" value="AT5G11210"/>
</dbReference>
<dbReference type="KEGG" id="ath:AT5G11210"/>
<dbReference type="Araport" id="AT5G11210"/>
<dbReference type="TAIR" id="AT5G11210">
    <property type="gene designation" value="GLR2.5"/>
</dbReference>
<dbReference type="eggNOG" id="KOG1052">
    <property type="taxonomic scope" value="Eukaryota"/>
</dbReference>
<dbReference type="HOGENOM" id="CLU_007358_0_1_1"/>
<dbReference type="InParanoid" id="Q9LFN5"/>
<dbReference type="OMA" id="NFGYWAY"/>
<dbReference type="PhylomeDB" id="Q9LFN5"/>
<dbReference type="PRO" id="PR:Q9LFN5"/>
<dbReference type="Proteomes" id="UP000006548">
    <property type="component" value="Chromosome 5"/>
</dbReference>
<dbReference type="ExpressionAtlas" id="Q9LFN5">
    <property type="expression patterns" value="baseline and differential"/>
</dbReference>
<dbReference type="GO" id="GO:0005886">
    <property type="term" value="C:plasma membrane"/>
    <property type="evidence" value="ECO:0000250"/>
    <property type="project" value="UniProtKB"/>
</dbReference>
<dbReference type="GO" id="GO:0005262">
    <property type="term" value="F:calcium channel activity"/>
    <property type="evidence" value="ECO:0000250"/>
    <property type="project" value="UniProtKB"/>
</dbReference>
<dbReference type="GO" id="GO:0004930">
    <property type="term" value="F:G protein-coupled receptor activity"/>
    <property type="evidence" value="ECO:0007669"/>
    <property type="project" value="InterPro"/>
</dbReference>
<dbReference type="GO" id="GO:0008066">
    <property type="term" value="F:glutamate receptor activity"/>
    <property type="evidence" value="ECO:0000250"/>
    <property type="project" value="UniProtKB"/>
</dbReference>
<dbReference type="GO" id="GO:0015276">
    <property type="term" value="F:ligand-gated monoatomic ion channel activity"/>
    <property type="evidence" value="ECO:0007669"/>
    <property type="project" value="InterPro"/>
</dbReference>
<dbReference type="GO" id="GO:0006816">
    <property type="term" value="P:calcium ion transport"/>
    <property type="evidence" value="ECO:0000250"/>
    <property type="project" value="UniProtKB"/>
</dbReference>
<dbReference type="GO" id="GO:0019722">
    <property type="term" value="P:calcium-mediated signaling"/>
    <property type="evidence" value="ECO:0000250"/>
    <property type="project" value="UniProtKB"/>
</dbReference>
<dbReference type="GO" id="GO:0071230">
    <property type="term" value="P:cellular response to amino acid stimulus"/>
    <property type="evidence" value="ECO:0000250"/>
    <property type="project" value="UniProtKB"/>
</dbReference>
<dbReference type="CDD" id="cd13686">
    <property type="entry name" value="GluR_Plant"/>
    <property type="match status" value="1"/>
</dbReference>
<dbReference type="CDD" id="cd19990">
    <property type="entry name" value="PBP1_GABAb_receptor_plant"/>
    <property type="match status" value="1"/>
</dbReference>
<dbReference type="FunFam" id="1.10.287.70:FF:000037">
    <property type="entry name" value="Glutamate receptor"/>
    <property type="match status" value="1"/>
</dbReference>
<dbReference type="FunFam" id="3.40.190.10:FF:000103">
    <property type="entry name" value="Glutamate receptor"/>
    <property type="match status" value="1"/>
</dbReference>
<dbReference type="FunFam" id="3.40.50.2300:FF:000169">
    <property type="entry name" value="Glutamate receptor"/>
    <property type="match status" value="1"/>
</dbReference>
<dbReference type="FunFam" id="3.40.50.2300:FF:000526">
    <property type="entry name" value="Glutamate receptor 2.5"/>
    <property type="match status" value="1"/>
</dbReference>
<dbReference type="FunFam" id="3.40.190.10:FF:000195">
    <property type="entry name" value="Glutamate receptor 2.7"/>
    <property type="match status" value="1"/>
</dbReference>
<dbReference type="Gene3D" id="1.10.287.70">
    <property type="match status" value="1"/>
</dbReference>
<dbReference type="Gene3D" id="3.40.50.2300">
    <property type="match status" value="2"/>
</dbReference>
<dbReference type="Gene3D" id="3.40.190.10">
    <property type="entry name" value="Periplasmic binding protein-like II"/>
    <property type="match status" value="2"/>
</dbReference>
<dbReference type="InterPro" id="IPR001828">
    <property type="entry name" value="ANF_lig-bd_rcpt"/>
</dbReference>
<dbReference type="InterPro" id="IPR044440">
    <property type="entry name" value="GABAb_receptor_plant_PBP1"/>
</dbReference>
<dbReference type="InterPro" id="IPR019594">
    <property type="entry name" value="Glu/Gly-bd"/>
</dbReference>
<dbReference type="InterPro" id="IPR000337">
    <property type="entry name" value="GPCR_3"/>
</dbReference>
<dbReference type="InterPro" id="IPR015683">
    <property type="entry name" value="Ionotropic_Glu_rcpt"/>
</dbReference>
<dbReference type="InterPro" id="IPR001320">
    <property type="entry name" value="Iontro_rcpt_C"/>
</dbReference>
<dbReference type="InterPro" id="IPR017103">
    <property type="entry name" value="Iontropic_Glu_rcpt_pln"/>
</dbReference>
<dbReference type="InterPro" id="IPR028082">
    <property type="entry name" value="Peripla_BP_I"/>
</dbReference>
<dbReference type="PANTHER" id="PTHR34836">
    <property type="entry name" value="OS06G0188250 PROTEIN"/>
    <property type="match status" value="1"/>
</dbReference>
<dbReference type="PANTHER" id="PTHR34836:SF1">
    <property type="entry name" value="OS09G0428600 PROTEIN"/>
    <property type="match status" value="1"/>
</dbReference>
<dbReference type="Pfam" id="PF01094">
    <property type="entry name" value="ANF_receptor"/>
    <property type="match status" value="1"/>
</dbReference>
<dbReference type="Pfam" id="PF00060">
    <property type="entry name" value="Lig_chan"/>
    <property type="match status" value="1"/>
</dbReference>
<dbReference type="Pfam" id="PF10613">
    <property type="entry name" value="Lig_chan-Glu_bd"/>
    <property type="match status" value="1"/>
</dbReference>
<dbReference type="PIRSF" id="PIRSF037090">
    <property type="entry name" value="Iontro_Glu-like_rcpt_pln"/>
    <property type="match status" value="1"/>
</dbReference>
<dbReference type="PRINTS" id="PR00248">
    <property type="entry name" value="GPCRMGR"/>
</dbReference>
<dbReference type="SMART" id="SM00079">
    <property type="entry name" value="PBPe"/>
    <property type="match status" value="1"/>
</dbReference>
<dbReference type="SUPFAM" id="SSF53822">
    <property type="entry name" value="Periplasmic binding protein-like I"/>
    <property type="match status" value="1"/>
</dbReference>
<dbReference type="SUPFAM" id="SSF53850">
    <property type="entry name" value="Periplasmic binding protein-like II"/>
    <property type="match status" value="1"/>
</dbReference>
<protein>
    <recommendedName>
        <fullName>Glutamate receptor 2.5</fullName>
    </recommendedName>
    <alternativeName>
        <fullName>Ligand-gated ion channel 2.5</fullName>
    </alternativeName>
</protein>
<organism>
    <name type="scientific">Arabidopsis thaliana</name>
    <name type="common">Mouse-ear cress</name>
    <dbReference type="NCBI Taxonomy" id="3702"/>
    <lineage>
        <taxon>Eukaryota</taxon>
        <taxon>Viridiplantae</taxon>
        <taxon>Streptophyta</taxon>
        <taxon>Embryophyta</taxon>
        <taxon>Tracheophyta</taxon>
        <taxon>Spermatophyta</taxon>
        <taxon>Magnoliopsida</taxon>
        <taxon>eudicotyledons</taxon>
        <taxon>Gunneridae</taxon>
        <taxon>Pentapetalae</taxon>
        <taxon>rosids</taxon>
        <taxon>malvids</taxon>
        <taxon>Brassicales</taxon>
        <taxon>Brassicaceae</taxon>
        <taxon>Camelineae</taxon>
        <taxon>Arabidopsis</taxon>
    </lineage>
</organism>
<evidence type="ECO:0000250" key="1"/>
<evidence type="ECO:0000255" key="2"/>
<evidence type="ECO:0000256" key="3">
    <source>
        <dbReference type="SAM" id="MobiDB-lite"/>
    </source>
</evidence>
<evidence type="ECO:0000269" key="4">
    <source>
    </source>
</evidence>
<evidence type="ECO:0000305" key="5"/>
<comment type="function">
    <text>Glutamate-gated receptor that probably acts as a non-selective cation channel. May be involved in light-signal transduction and calcium homeostasis via the regulation of calcium influx into cells.</text>
</comment>
<comment type="subunit">
    <text evidence="1">May form heteromers.</text>
</comment>
<comment type="subcellular location">
    <subcellularLocation>
        <location>Membrane</location>
        <topology>Multi-pass membrane protein</topology>
    </subcellularLocation>
</comment>
<comment type="tissue specificity">
    <text evidence="4">Expressed predominantly in roots.</text>
</comment>
<comment type="similarity">
    <text evidence="5">Belongs to the glutamate-gated ion channel (TC 1.A.10.1) family.</text>
</comment>
<comment type="sequence caution" evidence="5">
    <conflict type="erroneous gene model prediction">
        <sequence resource="EMBL-CDS" id="CAB96656"/>
    </conflict>
</comment>
<reference key="1">
    <citation type="journal article" date="2000" name="Nature">
        <title>Sequence and analysis of chromosome 5 of the plant Arabidopsis thaliana.</title>
        <authorList>
            <person name="Tabata S."/>
            <person name="Kaneko T."/>
            <person name="Nakamura Y."/>
            <person name="Kotani H."/>
            <person name="Kato T."/>
            <person name="Asamizu E."/>
            <person name="Miyajima N."/>
            <person name="Sasamoto S."/>
            <person name="Kimura T."/>
            <person name="Hosouchi T."/>
            <person name="Kawashima K."/>
            <person name="Kohara M."/>
            <person name="Matsumoto M."/>
            <person name="Matsuno A."/>
            <person name="Muraki A."/>
            <person name="Nakayama S."/>
            <person name="Nakazaki N."/>
            <person name="Naruo K."/>
            <person name="Okumura S."/>
            <person name="Shinpo S."/>
            <person name="Takeuchi C."/>
            <person name="Wada T."/>
            <person name="Watanabe A."/>
            <person name="Yamada M."/>
            <person name="Yasuda M."/>
            <person name="Sato S."/>
            <person name="de la Bastide M."/>
            <person name="Huang E."/>
            <person name="Spiegel L."/>
            <person name="Gnoj L."/>
            <person name="O'Shaughnessy A."/>
            <person name="Preston R."/>
            <person name="Habermann K."/>
            <person name="Murray J."/>
            <person name="Johnson D."/>
            <person name="Rohlfing T."/>
            <person name="Nelson J."/>
            <person name="Stoneking T."/>
            <person name="Pepin K."/>
            <person name="Spieth J."/>
            <person name="Sekhon M."/>
            <person name="Armstrong J."/>
            <person name="Becker M."/>
            <person name="Belter E."/>
            <person name="Cordum H."/>
            <person name="Cordes M."/>
            <person name="Courtney L."/>
            <person name="Courtney W."/>
            <person name="Dante M."/>
            <person name="Du H."/>
            <person name="Edwards J."/>
            <person name="Fryman J."/>
            <person name="Haakensen B."/>
            <person name="Lamar E."/>
            <person name="Latreille P."/>
            <person name="Leonard S."/>
            <person name="Meyer R."/>
            <person name="Mulvaney E."/>
            <person name="Ozersky P."/>
            <person name="Riley A."/>
            <person name="Strowmatt C."/>
            <person name="Wagner-McPherson C."/>
            <person name="Wollam A."/>
            <person name="Yoakum M."/>
            <person name="Bell M."/>
            <person name="Dedhia N."/>
            <person name="Parnell L."/>
            <person name="Shah R."/>
            <person name="Rodriguez M."/>
            <person name="Hoon See L."/>
            <person name="Vil D."/>
            <person name="Baker J."/>
            <person name="Kirchoff K."/>
            <person name="Toth K."/>
            <person name="King L."/>
            <person name="Bahret A."/>
            <person name="Miller B."/>
            <person name="Marra M.A."/>
            <person name="Martienssen R."/>
            <person name="McCombie W.R."/>
            <person name="Wilson R.K."/>
            <person name="Murphy G."/>
            <person name="Bancroft I."/>
            <person name="Volckaert G."/>
            <person name="Wambutt R."/>
            <person name="Duesterhoeft A."/>
            <person name="Stiekema W."/>
            <person name="Pohl T."/>
            <person name="Entian K.-D."/>
            <person name="Terryn N."/>
            <person name="Hartley N."/>
            <person name="Bent E."/>
            <person name="Johnson S."/>
            <person name="Langham S.-A."/>
            <person name="McCullagh B."/>
            <person name="Robben J."/>
            <person name="Grymonprez B."/>
            <person name="Zimmermann W."/>
            <person name="Ramsperger U."/>
            <person name="Wedler H."/>
            <person name="Balke K."/>
            <person name="Wedler E."/>
            <person name="Peters S."/>
            <person name="van Staveren M."/>
            <person name="Dirkse W."/>
            <person name="Mooijman P."/>
            <person name="Klein Lankhorst R."/>
            <person name="Weitzenegger T."/>
            <person name="Bothe G."/>
            <person name="Rose M."/>
            <person name="Hauf J."/>
            <person name="Berneiser S."/>
            <person name="Hempel S."/>
            <person name="Feldpausch M."/>
            <person name="Lamberth S."/>
            <person name="Villarroel R."/>
            <person name="Gielen J."/>
            <person name="Ardiles W."/>
            <person name="Bents O."/>
            <person name="Lemcke K."/>
            <person name="Kolesov G."/>
            <person name="Mayer K.F.X."/>
            <person name="Rudd S."/>
            <person name="Schoof H."/>
            <person name="Schueller C."/>
            <person name="Zaccaria P."/>
            <person name="Mewes H.-W."/>
            <person name="Bevan M."/>
            <person name="Fransz P.F."/>
        </authorList>
    </citation>
    <scope>NUCLEOTIDE SEQUENCE [LARGE SCALE GENOMIC DNA]</scope>
    <source>
        <strain>cv. Columbia</strain>
    </source>
</reference>
<reference key="2">
    <citation type="journal article" date="2017" name="Plant J.">
        <title>Araport11: a complete reannotation of the Arabidopsis thaliana reference genome.</title>
        <authorList>
            <person name="Cheng C.Y."/>
            <person name="Krishnakumar V."/>
            <person name="Chan A.P."/>
            <person name="Thibaud-Nissen F."/>
            <person name="Schobel S."/>
            <person name="Town C.D."/>
        </authorList>
    </citation>
    <scope>GENOME REANNOTATION</scope>
    <source>
        <strain>cv. Columbia</strain>
    </source>
</reference>
<reference key="3">
    <citation type="journal article" date="2001" name="Science">
        <title>The identity of plant glutamate receptors.</title>
        <authorList>
            <person name="Lacombe B."/>
            <person name="Becker D."/>
            <person name="Hedrich R."/>
            <person name="DeSalle R."/>
            <person name="Hollmann M."/>
            <person name="Kwak J.M."/>
            <person name="Schroeder J.I."/>
            <person name="Le Novere N."/>
            <person name="Nam H.G."/>
            <person name="Spalding E.P."/>
            <person name="Tester M."/>
            <person name="Turano F.J."/>
            <person name="Chiu J."/>
            <person name="Coruzzi G."/>
        </authorList>
    </citation>
    <scope>GENE FAMILY</scope>
    <scope>NOMENCLATURE</scope>
</reference>
<reference key="4">
    <citation type="journal article" date="2002" name="Mol. Biol. Evol.">
        <title>Phylogenetic and expression analysis of the glutamate-receptor-like gene family in Arabidopsis thaliana.</title>
        <authorList>
            <person name="Chiu J.C."/>
            <person name="Brenner E.D."/>
            <person name="DeSalle R."/>
            <person name="Nitabach M.N."/>
            <person name="Holmes T.C."/>
            <person name="Coruzzi G.M."/>
        </authorList>
    </citation>
    <scope>TISSUE SPECIFICITY</scope>
</reference>
<feature type="signal peptide" evidence="2">
    <location>
        <begin position="1"/>
        <end position="30"/>
    </location>
</feature>
<feature type="chain" id="PRO_0000011600" description="Glutamate receptor 2.5">
    <location>
        <begin position="31"/>
        <end position="918"/>
    </location>
</feature>
<feature type="topological domain" description="Extracellular" evidence="2">
    <location>
        <begin position="31"/>
        <end position="586"/>
    </location>
</feature>
<feature type="transmembrane region" description="Helical" evidence="2">
    <location>
        <begin position="587"/>
        <end position="607"/>
    </location>
</feature>
<feature type="topological domain" description="Cytoplasmic" evidence="2">
    <location>
        <begin position="608"/>
        <end position="616"/>
    </location>
</feature>
<feature type="transmembrane region" description="Helical" evidence="2">
    <location>
        <begin position="617"/>
        <end position="637"/>
    </location>
</feature>
<feature type="topological domain" description="Cytoplasmic" evidence="2">
    <location>
        <begin position="638"/>
        <end position="647"/>
    </location>
</feature>
<feature type="transmembrane region" description="Helical" evidence="2">
    <location>
        <begin position="648"/>
        <end position="668"/>
    </location>
</feature>
<feature type="topological domain" description="Extracellular" evidence="2">
    <location>
        <begin position="669"/>
        <end position="828"/>
    </location>
</feature>
<feature type="transmembrane region" description="Helical" evidence="2">
    <location>
        <begin position="829"/>
        <end position="849"/>
    </location>
</feature>
<feature type="topological domain" description="Cytoplasmic" evidence="2">
    <location>
        <begin position="850"/>
        <end position="918"/>
    </location>
</feature>
<feature type="region of interest" description="Disordered" evidence="3">
    <location>
        <begin position="857"/>
        <end position="881"/>
    </location>
</feature>
<feature type="compositionally biased region" description="Low complexity" evidence="3">
    <location>
        <begin position="866"/>
        <end position="881"/>
    </location>
</feature>
<feature type="glycosylation site" description="N-linked (GlcNAc...) asparagine" evidence="2">
    <location>
        <position position="46"/>
    </location>
</feature>
<feature type="glycosylation site" description="N-linked (GlcNAc...) asparagine" evidence="2">
    <location>
        <position position="58"/>
    </location>
</feature>
<feature type="glycosylation site" description="N-linked (GlcNAc...) asparagine" evidence="2">
    <location>
        <position position="122"/>
    </location>
</feature>
<feature type="glycosylation site" description="N-linked (GlcNAc...) asparagine" evidence="2">
    <location>
        <position position="336"/>
    </location>
</feature>
<feature type="glycosylation site" description="N-linked (GlcNAc...) asparagine" evidence="2">
    <location>
        <position position="340"/>
    </location>
</feature>
<feature type="glycosylation site" description="N-linked (GlcNAc...) asparagine" evidence="2">
    <location>
        <position position="546"/>
    </location>
</feature>
<feature type="glycosylation site" description="N-linked (GlcNAc...) asparagine" evidence="2">
    <location>
        <position position="791"/>
    </location>
</feature>
<accession>Q9LFN5</accession>
<accession>F4JWF9</accession>
<keyword id="KW-0325">Glycoprotein</keyword>
<keyword id="KW-0407">Ion channel</keyword>
<keyword id="KW-0406">Ion transport</keyword>
<keyword id="KW-1071">Ligand-gated ion channel</keyword>
<keyword id="KW-0472">Membrane</keyword>
<keyword id="KW-0675">Receptor</keyword>
<keyword id="KW-1185">Reference proteome</keyword>
<keyword id="KW-0732">Signal</keyword>
<keyword id="KW-0812">Transmembrane</keyword>
<keyword id="KW-1133">Transmembrane helix</keyword>
<keyword id="KW-0813">Transport</keyword>
<proteinExistence type="evidence at transcript level"/>
<sequence>MSLFHHLVSRFLSLWLLIFLVFLVLSLGKSQKEALQVKVGIVLGSNVTLADLSLRAINMSLSEFYNTHNGFKTRIVLNVRDSKQTVVGAAASALYLIKKREVVAIIGPGTSMQAPFLINLGNQSKVPIISFSATSPLLDSLRSPYFIRATHDDSSQVQAISAIIESFRWREVVPIYVDNEFGEGILPNLVDAFQEINVRIRYRSAISLHYSDDQIKKELYKLMTMPTRVFIVHMLPDLGSRLFSIAKEIDMLSKGYVWIVTNGIADLMSIMGESSLVNMHGVLGVKTYFAKSKELLHLEARWQKRFGGEELNNFACWAYDAATALAMSVEEIRHVNMSFNTTKEDTSRDDIGTDLDELGVALSGPKLLDALSTVSFKGVAGRFQLKNGKLEATTFKIINIEESGERTVGFWKSKVGLVKSLRVDKVSHSSRRLRPIIWPGDTIFVPKGWEFPTNAKKLRIAVPKKDGFNNFVEVTKDENTNVPTVTGFCIDVFNTVMSQMPYAVSYEYIPFDTPDGKPRGSYDEMVYNVFLGEFDGAVGDTTILANRSHYVDFALPYSETGIVFLVPVKDGKEKGEWVFLKPLTKELWLVTAASFLYIGIMVWIFEYQADEEFREQMIIDKISSVFYFSFSTLFFAHRRPSESFFTRVLVVVWCFVLLILTQSYTATLTSMLTVQELRPTVRHMDDLRKSGVNIGYQTGSFTFERLKQMRFDESRLKTYNSPEEMRELFLHKSSNGGIDAAFDEVAYIKLFMAKYCSEYSIIEPTFKADGFGFAFPLGSPLVSDISRQILNITEGDAMKAIENKWFLGEKHCLDSTTSDSPIQLDHHSFEALFLIVFVVSVILLLLMLASRGYQERQHNASPNLPNDQANAAQEEVNEEGNVGDHIVEVDTALVRRKKLTSNTIPIRRVAPLSRLKSA</sequence>
<gene>
    <name type="primary">GLR2.5</name>
    <name type="ordered locus">At5g11210</name>
    <name type="ORF">F2I11_100</name>
</gene>